<evidence type="ECO:0000250" key="1"/>
<evidence type="ECO:0000255" key="2"/>
<evidence type="ECO:0000255" key="3">
    <source>
        <dbReference type="PROSITE-ProRule" id="PRU00691"/>
    </source>
</evidence>
<evidence type="ECO:0000305" key="4"/>
<accession>O81332</accession>
<name>TRXF_MESCR</name>
<keyword id="KW-0150">Chloroplast</keyword>
<keyword id="KW-1015">Disulfide bond</keyword>
<keyword id="KW-0249">Electron transport</keyword>
<keyword id="KW-0934">Plastid</keyword>
<keyword id="KW-0676">Redox-active center</keyword>
<keyword id="KW-0809">Transit peptide</keyword>
<keyword id="KW-0813">Transport</keyword>
<feature type="transit peptide" description="Chloroplast" evidence="2">
    <location>
        <begin position="1"/>
        <end status="unknown"/>
    </location>
</feature>
<feature type="chain" id="PRO_0000034159" description="Thioredoxin F-type, chloroplastic">
    <location>
        <begin status="unknown"/>
        <end position="191"/>
    </location>
</feature>
<feature type="domain" description="Thioredoxin" evidence="3">
    <location>
        <begin position="68"/>
        <end position="190"/>
    </location>
</feature>
<feature type="active site" description="Nucleophile" evidence="1">
    <location>
        <position position="115"/>
    </location>
</feature>
<feature type="active site" description="Nucleophile" evidence="1">
    <location>
        <position position="118"/>
    </location>
</feature>
<feature type="site" description="Deprotonates C-terminal active site Cys" evidence="1">
    <location>
        <position position="109"/>
    </location>
</feature>
<feature type="site" description="Contributes to redox potential value" evidence="1">
    <location>
        <position position="116"/>
    </location>
</feature>
<feature type="site" description="Contributes to redox potential value" evidence="1">
    <location>
        <position position="117"/>
    </location>
</feature>
<feature type="disulfide bond" description="Redox-active" evidence="3">
    <location>
        <begin position="115"/>
        <end position="118"/>
    </location>
</feature>
<dbReference type="EMBL" id="AF069314">
    <property type="protein sequence ID" value="AAC19392.1"/>
    <property type="molecule type" value="mRNA"/>
</dbReference>
<dbReference type="PIR" id="T12261">
    <property type="entry name" value="T12261"/>
</dbReference>
<dbReference type="SMR" id="O81332"/>
<dbReference type="GO" id="GO:0009507">
    <property type="term" value="C:chloroplast"/>
    <property type="evidence" value="ECO:0007669"/>
    <property type="project" value="UniProtKB-SubCell"/>
</dbReference>
<dbReference type="CDD" id="cd02947">
    <property type="entry name" value="TRX_family"/>
    <property type="match status" value="1"/>
</dbReference>
<dbReference type="Gene3D" id="3.40.30.10">
    <property type="entry name" value="Glutaredoxin"/>
    <property type="match status" value="1"/>
</dbReference>
<dbReference type="InterPro" id="IPR036249">
    <property type="entry name" value="Thioredoxin-like_sf"/>
</dbReference>
<dbReference type="InterPro" id="IPR017937">
    <property type="entry name" value="Thioredoxin_CS"/>
</dbReference>
<dbReference type="InterPro" id="IPR013766">
    <property type="entry name" value="Thioredoxin_domain"/>
</dbReference>
<dbReference type="PANTHER" id="PTHR46115">
    <property type="entry name" value="THIOREDOXIN-LIKE PROTEIN 1"/>
    <property type="match status" value="1"/>
</dbReference>
<dbReference type="Pfam" id="PF00085">
    <property type="entry name" value="Thioredoxin"/>
    <property type="match status" value="1"/>
</dbReference>
<dbReference type="PRINTS" id="PR00421">
    <property type="entry name" value="THIOREDOXIN"/>
</dbReference>
<dbReference type="SUPFAM" id="SSF52833">
    <property type="entry name" value="Thioredoxin-like"/>
    <property type="match status" value="1"/>
</dbReference>
<dbReference type="PROSITE" id="PS00194">
    <property type="entry name" value="THIOREDOXIN_1"/>
    <property type="match status" value="1"/>
</dbReference>
<dbReference type="PROSITE" id="PS51352">
    <property type="entry name" value="THIOREDOXIN_2"/>
    <property type="match status" value="1"/>
</dbReference>
<protein>
    <recommendedName>
        <fullName>Thioredoxin F-type, chloroplastic</fullName>
        <shortName>Trx-F</shortName>
    </recommendedName>
</protein>
<reference key="1">
    <citation type="submission" date="1998-06" db="EMBL/GenBank/DDBJ databases">
        <title>A cDNA for Thioredoxin F precursor from the common ice plant.</title>
        <authorList>
            <person name="Michalowski C.B."/>
            <person name="Bohnert H.J."/>
        </authorList>
    </citation>
    <scope>NUCLEOTIDE SEQUENCE [MRNA]</scope>
</reference>
<comment type="function">
    <text evidence="1">Participates in various redox reactions through the reversible oxidation of the active center dithiol to a disulfide. The F form is known to activate a number of enzymes of the photosynthetic carbon cycle (By similarity).</text>
</comment>
<comment type="subunit">
    <text evidence="1">Forms a complex with heterodimeric ferredoxin-thioredoxin reductase (FTR) and ferredoxin.</text>
</comment>
<comment type="subcellular location">
    <subcellularLocation>
        <location evidence="1">Plastid</location>
        <location evidence="1">Chloroplast</location>
    </subcellularLocation>
</comment>
<comment type="similarity">
    <text evidence="4">Belongs to the thioredoxin family. Plant F-type subfamily.</text>
</comment>
<organism>
    <name type="scientific">Mesembryanthemum crystallinum</name>
    <name type="common">Common ice plant</name>
    <name type="synonym">Cryophytum crystallinum</name>
    <dbReference type="NCBI Taxonomy" id="3544"/>
    <lineage>
        <taxon>Eukaryota</taxon>
        <taxon>Viridiplantae</taxon>
        <taxon>Streptophyta</taxon>
        <taxon>Embryophyta</taxon>
        <taxon>Tracheophyta</taxon>
        <taxon>Spermatophyta</taxon>
        <taxon>Magnoliopsida</taxon>
        <taxon>eudicotyledons</taxon>
        <taxon>Gunneridae</taxon>
        <taxon>Pentapetalae</taxon>
        <taxon>Caryophyllales</taxon>
        <taxon>Aizoaceae</taxon>
        <taxon>Mesembryanthemum</taxon>
        <taxon>Mesembryanthemum subgen. Cryophytum</taxon>
    </lineage>
</organism>
<proteinExistence type="evidence at transcript level"/>
<sequence length="191" mass="20641">MAMQLSLSHQSWAKSLASPITSFDPARSPPKRVELGPNCLNGGATAGKLMREKVGERMRMSGRSCCVKASLETAVGAESETLVGKVTEVDKDTFWPIANGAGDKPVVLDMYTQWCGPCKVMAPKYQELAEKLLDVVFLKLDCNQENKPLAKELGIRVVPTFKILKGGKIVDEVTGAKFDKLVAAIEAARSS</sequence>